<gene>
    <name type="primary">slx1</name>
    <name type="ORF">TSTA_116830</name>
</gene>
<feature type="chain" id="PRO_0000383800" description="Structure-specific endonuclease subunit slx1">
    <location>
        <begin position="1"/>
        <end position="389"/>
    </location>
</feature>
<feature type="domain" description="GIY-YIG" evidence="1">
    <location>
        <begin position="17"/>
        <end position="99"/>
    </location>
</feature>
<feature type="zinc finger region" description="SLX1-type" evidence="1">
    <location>
        <begin position="227"/>
        <end position="281"/>
    </location>
</feature>
<feature type="region of interest" description="Disordered" evidence="2">
    <location>
        <begin position="303"/>
        <end position="389"/>
    </location>
</feature>
<feature type="compositionally biased region" description="Acidic residues" evidence="2">
    <location>
        <begin position="338"/>
        <end position="349"/>
    </location>
</feature>
<feature type="compositionally biased region" description="Acidic residues" evidence="2">
    <location>
        <begin position="379"/>
        <end position="389"/>
    </location>
</feature>
<comment type="function">
    <text evidence="1">Catalytic subunit of the slx1-slx4 structure-specific endonuclease that resolves DNA secondary structures generated during DNA repair and recombination. Has endonuclease activity towards branched DNA substrates, introducing single-strand cuts in duplex DNA close to junctions with ss-DNA.</text>
</comment>
<comment type="cofactor">
    <cofactor evidence="1">
        <name>a divalent metal cation</name>
        <dbReference type="ChEBI" id="CHEBI:60240"/>
    </cofactor>
</comment>
<comment type="subunit">
    <text evidence="1">Forms a heterodimer with slx4.</text>
</comment>
<comment type="subcellular location">
    <subcellularLocation>
        <location evidence="1">Nucleus</location>
    </subcellularLocation>
</comment>
<comment type="similarity">
    <text evidence="1">Belongs to the SLX1 family.</text>
</comment>
<reference key="1">
    <citation type="journal article" date="2015" name="Genome Announc.">
        <title>Genome sequence of the AIDS-associated pathogen Penicillium marneffei (ATCC18224) and its near taxonomic relative Talaromyces stipitatus (ATCC10500).</title>
        <authorList>
            <person name="Nierman W.C."/>
            <person name="Fedorova-Abrams N.D."/>
            <person name="Andrianopoulos A."/>
        </authorList>
    </citation>
    <scope>NUCLEOTIDE SEQUENCE [LARGE SCALE GENOMIC DNA]</scope>
    <source>
        <strain>ATCC 10500 / CBS 375.48 / QM 6759 / NRRL 1006</strain>
    </source>
</reference>
<accession>B8MDD1</accession>
<organism>
    <name type="scientific">Talaromyces stipitatus (strain ATCC 10500 / CBS 375.48 / QM 6759 / NRRL 1006)</name>
    <name type="common">Penicillium stipitatum</name>
    <dbReference type="NCBI Taxonomy" id="441959"/>
    <lineage>
        <taxon>Eukaryota</taxon>
        <taxon>Fungi</taxon>
        <taxon>Dikarya</taxon>
        <taxon>Ascomycota</taxon>
        <taxon>Pezizomycotina</taxon>
        <taxon>Eurotiomycetes</taxon>
        <taxon>Eurotiomycetidae</taxon>
        <taxon>Eurotiales</taxon>
        <taxon>Trichocomaceae</taxon>
        <taxon>Talaromyces</taxon>
        <taxon>Talaromyces sect. Talaromyces</taxon>
    </lineage>
</organism>
<evidence type="ECO:0000255" key="1">
    <source>
        <dbReference type="HAMAP-Rule" id="MF_03100"/>
    </source>
</evidence>
<evidence type="ECO:0000256" key="2">
    <source>
        <dbReference type="SAM" id="MobiDB-lite"/>
    </source>
</evidence>
<protein>
    <recommendedName>
        <fullName evidence="1">Structure-specific endonuclease subunit slx1</fullName>
        <ecNumber evidence="1">3.1.-.-</ecNumber>
    </recommendedName>
</protein>
<name>SLX1_TALSN</name>
<proteinExistence type="inferred from homology"/>
<keyword id="KW-0227">DNA damage</keyword>
<keyword id="KW-0233">DNA recombination</keyword>
<keyword id="KW-0234">DNA repair</keyword>
<keyword id="KW-0255">Endonuclease</keyword>
<keyword id="KW-0378">Hydrolase</keyword>
<keyword id="KW-0479">Metal-binding</keyword>
<keyword id="KW-0540">Nuclease</keyword>
<keyword id="KW-0539">Nucleus</keyword>
<keyword id="KW-1185">Reference proteome</keyword>
<keyword id="KW-0862">Zinc</keyword>
<keyword id="KW-0863">Zinc-finger</keyword>
<dbReference type="EC" id="3.1.-.-" evidence="1"/>
<dbReference type="EMBL" id="EQ962655">
    <property type="protein sequence ID" value="EED17894.1"/>
    <property type="molecule type" value="Genomic_DNA"/>
</dbReference>
<dbReference type="RefSeq" id="XP_002481886.1">
    <property type="nucleotide sequence ID" value="XM_002481841.1"/>
</dbReference>
<dbReference type="SMR" id="B8MDD1"/>
<dbReference type="FunCoup" id="B8MDD1">
    <property type="interactions" value="405"/>
</dbReference>
<dbReference type="STRING" id="441959.B8MDD1"/>
<dbReference type="GeneID" id="8102075"/>
<dbReference type="VEuPathDB" id="FungiDB:TSTA_116830"/>
<dbReference type="eggNOG" id="KOG3005">
    <property type="taxonomic scope" value="Eukaryota"/>
</dbReference>
<dbReference type="HOGENOM" id="CLU_030739_1_0_1"/>
<dbReference type="InParanoid" id="B8MDD1"/>
<dbReference type="OMA" id="HNRGCDF"/>
<dbReference type="OrthoDB" id="24645at2759"/>
<dbReference type="PhylomeDB" id="B8MDD1"/>
<dbReference type="Proteomes" id="UP000001745">
    <property type="component" value="Unassembled WGS sequence"/>
</dbReference>
<dbReference type="GO" id="GO:0033557">
    <property type="term" value="C:Slx1-Slx4 complex"/>
    <property type="evidence" value="ECO:0007669"/>
    <property type="project" value="UniProtKB-UniRule"/>
</dbReference>
<dbReference type="GO" id="GO:0017108">
    <property type="term" value="F:5'-flap endonuclease activity"/>
    <property type="evidence" value="ECO:0007669"/>
    <property type="project" value="InterPro"/>
</dbReference>
<dbReference type="GO" id="GO:0008821">
    <property type="term" value="F:crossover junction DNA endonuclease activity"/>
    <property type="evidence" value="ECO:0007669"/>
    <property type="project" value="TreeGrafter"/>
</dbReference>
<dbReference type="GO" id="GO:0008270">
    <property type="term" value="F:zinc ion binding"/>
    <property type="evidence" value="ECO:0007669"/>
    <property type="project" value="UniProtKB-KW"/>
</dbReference>
<dbReference type="GO" id="GO:0000724">
    <property type="term" value="P:double-strand break repair via homologous recombination"/>
    <property type="evidence" value="ECO:0007669"/>
    <property type="project" value="TreeGrafter"/>
</dbReference>
<dbReference type="CDD" id="cd10455">
    <property type="entry name" value="GIY-YIG_SLX1"/>
    <property type="match status" value="1"/>
</dbReference>
<dbReference type="FunFam" id="3.40.1440.10:FF:000006">
    <property type="entry name" value="Structure-specific endonuclease subunit SLX1"/>
    <property type="match status" value="1"/>
</dbReference>
<dbReference type="Gene3D" id="3.40.1440.10">
    <property type="entry name" value="GIY-YIG endonuclease"/>
    <property type="match status" value="1"/>
</dbReference>
<dbReference type="Gene3D" id="3.30.40.10">
    <property type="entry name" value="Zinc/RING finger domain, C3HC4 (zinc finger)"/>
    <property type="match status" value="1"/>
</dbReference>
<dbReference type="HAMAP" id="MF_03100">
    <property type="entry name" value="Endonuc_su_Slx1"/>
    <property type="match status" value="1"/>
</dbReference>
<dbReference type="InterPro" id="IPR000305">
    <property type="entry name" value="GIY-YIG_endonuc"/>
</dbReference>
<dbReference type="InterPro" id="IPR035901">
    <property type="entry name" value="GIY-YIG_endonuc_sf"/>
</dbReference>
<dbReference type="InterPro" id="IPR027520">
    <property type="entry name" value="Slx1"/>
</dbReference>
<dbReference type="InterPro" id="IPR048749">
    <property type="entry name" value="SLX1_C"/>
</dbReference>
<dbReference type="InterPro" id="IPR050381">
    <property type="entry name" value="SLX1_endonuclease"/>
</dbReference>
<dbReference type="InterPro" id="IPR001841">
    <property type="entry name" value="Znf_RING"/>
</dbReference>
<dbReference type="InterPro" id="IPR013083">
    <property type="entry name" value="Znf_RING/FYVE/PHD"/>
</dbReference>
<dbReference type="PANTHER" id="PTHR20208">
    <property type="entry name" value="STRUCTURE-SPECIFIC ENDONUCLEASE SUBUNIT SLX1"/>
    <property type="match status" value="1"/>
</dbReference>
<dbReference type="PANTHER" id="PTHR20208:SF10">
    <property type="entry name" value="STRUCTURE-SPECIFIC ENDONUCLEASE SUBUNIT SLX1"/>
    <property type="match status" value="1"/>
</dbReference>
<dbReference type="Pfam" id="PF01541">
    <property type="entry name" value="GIY-YIG"/>
    <property type="match status" value="1"/>
</dbReference>
<dbReference type="Pfam" id="PF21202">
    <property type="entry name" value="SLX1_C"/>
    <property type="match status" value="1"/>
</dbReference>
<dbReference type="SUPFAM" id="SSF82771">
    <property type="entry name" value="GIY-YIG endonuclease"/>
    <property type="match status" value="1"/>
</dbReference>
<dbReference type="SUPFAM" id="SSF57850">
    <property type="entry name" value="RING/U-box"/>
    <property type="match status" value="1"/>
</dbReference>
<dbReference type="PROSITE" id="PS50164">
    <property type="entry name" value="GIY_YIG"/>
    <property type="match status" value="1"/>
</dbReference>
<sequence>MTTTVSEEAVLTKPIPAFYCCYLLRSAKRPSALYIGSTPDPARRLEQHNGFAKGGAKRTERNTLRPWEMVAIVEGFPSRTGALQFEWSWQHVHTTRHIGAVETDQLNRKRKNPPTDKGSGIWTSTPKVLGNLHQLLRSTYFGTWPLTVRFLSSEAHNHWQRWIERADGLLPDTIRVKLDFRAEGASVLDSNLPANDMTHIDATYGGIQEHLAKSTSLLGDNTNSLSCEVCQQQLSTQTEIIVVCSHRRCHAVFHVNCISQLFLEDEGSSGLVPILGECPACRQEVTWVELMKELSMRLHGGKNATKLLKGERKDKANTQGTKSSKGGKKPAKTGDYTLDGDYEDLDEDWMNAVNVEPSSEDGDRNAANVKGSTGRVEIVIDDSEEDGFD</sequence>